<proteinExistence type="evidence at transcript level"/>
<sequence length="774" mass="86604">MERPLCSHLCSCLAVLALLSPLSLAQYDSWPHYPEYFQQPAPEYHQPQAPANVAKIQLRLAGQKRKHSEGRVEVYYDGQWGTVCDDDFSIHAAHVVCRELGYVEAKSWTASSSYGKGEGPIWLDNLHCTGNEATLAACTSNGWGVTDCKHTEDVGVVCSDKRIPGFKFDNSLINQIENLNIQVEDIRIRAILSTYRKRTPVTEGYVEVKEGKTWKQICDKHWTAKNSRVICGMFGFPGERTYNAKVYKMFASRRKQRYWPFSMDCTGTEAHISSCKLGPQVSLDPMKNVTCENGLPAVVSCVPGQVFSPDGPSRFRKAYKPEQPLVRLRGGAYIGEGRVEVLKNGEWGTVCDDKWDLVSASVVCRELGFGSAKEAVTGSRLGQGIGPIHLNEIQCTGNEKSIIDCKFNTESQGCNHEEDAGVRCNTPAMGLQKKLRLNGGRNPYEGRVEVLVERNGSLVWGMVCGQNWGIVEAMVVCRQLGLGFASNAFQETWYWHGDVNSNKVVMSGVKCSGTELSLAHCRHDGEDVACPQGGVQYGAGVACSETAPDLVLNAEMVQQTTYLEDRPMFMLQCAMEENCLSASAAQTNPTTGYRRLLRFSSQIHNNGQSDFRPKNGRHAWIWHDCHRHYHSMEVFTHYDLLNLNGTKVAEGHKASFCLEDTECEGDIQKNYECANFGDQGITMGCWDMYRHDIDCQWVDITDVPPGDYLFQVVINPNFEVAESDYSNNIMKCRSRYDGHRIWMYNCHIGGSFSEETEKKFGHFSGLLNNQLSPQ</sequence>
<keyword id="KW-0084">Basement membrane</keyword>
<keyword id="KW-0106">Calcium</keyword>
<keyword id="KW-0156">Chromatin regulator</keyword>
<keyword id="KW-0158">Chromosome</keyword>
<keyword id="KW-0186">Copper</keyword>
<keyword id="KW-1015">Disulfide bond</keyword>
<keyword id="KW-0256">Endoplasmic reticulum</keyword>
<keyword id="KW-0272">Extracellular matrix</keyword>
<keyword id="KW-0325">Glycoprotein</keyword>
<keyword id="KW-0886">LTQ</keyword>
<keyword id="KW-0479">Metal-binding</keyword>
<keyword id="KW-0539">Nucleus</keyword>
<keyword id="KW-0560">Oxidoreductase</keyword>
<keyword id="KW-1185">Reference proteome</keyword>
<keyword id="KW-0677">Repeat</keyword>
<keyword id="KW-0678">Repressor</keyword>
<keyword id="KW-0964">Secreted</keyword>
<keyword id="KW-0732">Signal</keyword>
<keyword id="KW-0801">TPQ</keyword>
<keyword id="KW-0804">Transcription</keyword>
<keyword id="KW-0805">Transcription regulation</keyword>
<name>LOXL2_PONAB</name>
<evidence type="ECO:0000250" key="1"/>
<evidence type="ECO:0000250" key="2">
    <source>
        <dbReference type="UniProtKB" id="P33072"/>
    </source>
</evidence>
<evidence type="ECO:0000250" key="3">
    <source>
        <dbReference type="UniProtKB" id="P58022"/>
    </source>
</evidence>
<evidence type="ECO:0000250" key="4">
    <source>
        <dbReference type="UniProtKB" id="Q9Y4K0"/>
    </source>
</evidence>
<evidence type="ECO:0000255" key="5"/>
<evidence type="ECO:0000255" key="6">
    <source>
        <dbReference type="PROSITE-ProRule" id="PRU00196"/>
    </source>
</evidence>
<evidence type="ECO:0000305" key="7"/>
<protein>
    <recommendedName>
        <fullName>Lysyl oxidase homolog 2</fullName>
        <ecNumber evidence="4">1.4.3.13</ecNumber>
    </recommendedName>
    <alternativeName>
        <fullName>Lysyl oxidase-like protein 2</fullName>
    </alternativeName>
</protein>
<feature type="signal peptide" evidence="5">
    <location>
        <begin position="1"/>
        <end position="25"/>
    </location>
</feature>
<feature type="chain" id="PRO_0000045440" description="Lysyl oxidase homolog 2">
    <location>
        <begin position="26"/>
        <end position="774"/>
    </location>
</feature>
<feature type="domain" description="SRCR 1" evidence="6">
    <location>
        <begin position="58"/>
        <end position="159"/>
    </location>
</feature>
<feature type="domain" description="SRCR 2" evidence="6">
    <location>
        <begin position="188"/>
        <end position="302"/>
    </location>
</feature>
<feature type="domain" description="SRCR 3" evidence="6">
    <location>
        <begin position="326"/>
        <end position="425"/>
    </location>
</feature>
<feature type="domain" description="SRCR 4" evidence="6">
    <location>
        <begin position="435"/>
        <end position="544"/>
    </location>
</feature>
<feature type="region of interest" description="Lysyl-oxidase like">
    <location>
        <begin position="548"/>
        <end position="751"/>
    </location>
</feature>
<feature type="binding site" evidence="4">
    <location>
        <position position="549"/>
    </location>
    <ligand>
        <name>Ca(2+)</name>
        <dbReference type="ChEBI" id="CHEBI:29108"/>
    </ligand>
</feature>
<feature type="binding site" evidence="4">
    <location>
        <position position="550"/>
    </location>
    <ligand>
        <name>Ca(2+)</name>
        <dbReference type="ChEBI" id="CHEBI:29108"/>
    </ligand>
</feature>
<feature type="binding site" evidence="4">
    <location>
        <position position="626"/>
    </location>
    <ligand>
        <name>Cu cation</name>
        <dbReference type="ChEBI" id="CHEBI:23378"/>
    </ligand>
</feature>
<feature type="binding site" evidence="4">
    <location>
        <position position="628"/>
    </location>
    <ligand>
        <name>Cu cation</name>
        <dbReference type="ChEBI" id="CHEBI:23378"/>
    </ligand>
</feature>
<feature type="binding site" evidence="4">
    <location>
        <position position="630"/>
    </location>
    <ligand>
        <name>Cu cation</name>
        <dbReference type="ChEBI" id="CHEBI:23378"/>
    </ligand>
</feature>
<feature type="binding site" evidence="4">
    <location>
        <position position="722"/>
    </location>
    <ligand>
        <name>Ca(2+)</name>
        <dbReference type="ChEBI" id="CHEBI:29108"/>
    </ligand>
</feature>
<feature type="binding site" evidence="4">
    <location>
        <position position="724"/>
    </location>
    <ligand>
        <name>Ca(2+)</name>
        <dbReference type="ChEBI" id="CHEBI:29108"/>
    </ligand>
</feature>
<feature type="binding site" evidence="4">
    <location>
        <position position="727"/>
    </location>
    <ligand>
        <name>Ca(2+)</name>
        <dbReference type="ChEBI" id="CHEBI:29108"/>
    </ligand>
</feature>
<feature type="binding site" evidence="4">
    <location>
        <position position="728"/>
    </location>
    <ligand>
        <name>Ca(2+)</name>
        <dbReference type="ChEBI" id="CHEBI:29108"/>
    </ligand>
</feature>
<feature type="modified residue" description="2',4',5'-topaquinone" evidence="2">
    <location>
        <position position="689"/>
    </location>
</feature>
<feature type="glycosylation site" description="N-linked (GlcNAc...) asparagine" evidence="5">
    <location>
        <position position="288"/>
    </location>
</feature>
<feature type="glycosylation site" description="N-linked (GlcNAc...) asparagine" evidence="5">
    <location>
        <position position="455"/>
    </location>
</feature>
<feature type="glycosylation site" description="N-linked (GlcNAc...) asparagine" evidence="5">
    <location>
        <position position="644"/>
    </location>
</feature>
<feature type="disulfide bond" evidence="6">
    <location>
        <begin position="84"/>
        <end position="148"/>
    </location>
</feature>
<feature type="disulfide bond" evidence="6">
    <location>
        <begin position="97"/>
        <end position="158"/>
    </location>
</feature>
<feature type="disulfide bond" evidence="6">
    <location>
        <begin position="128"/>
        <end position="138"/>
    </location>
</feature>
<feature type="disulfide bond" evidence="6">
    <location>
        <begin position="218"/>
        <end position="291"/>
    </location>
</feature>
<feature type="disulfide bond" evidence="6">
    <location>
        <begin position="231"/>
        <end position="301"/>
    </location>
</feature>
<feature type="disulfide bond" evidence="6">
    <location>
        <begin position="265"/>
        <end position="275"/>
    </location>
</feature>
<feature type="disulfide bond" evidence="6">
    <location>
        <begin position="351"/>
        <end position="414"/>
    </location>
</feature>
<feature type="disulfide bond" evidence="6">
    <location>
        <begin position="364"/>
        <end position="424"/>
    </location>
</feature>
<feature type="disulfide bond" evidence="6">
    <location>
        <begin position="395"/>
        <end position="405"/>
    </location>
</feature>
<feature type="disulfide bond" evidence="6">
    <location>
        <begin position="464"/>
        <end position="530"/>
    </location>
</feature>
<feature type="disulfide bond" evidence="6">
    <location>
        <begin position="477"/>
        <end position="543"/>
    </location>
</feature>
<feature type="disulfide bond" evidence="6">
    <location>
        <begin position="511"/>
        <end position="521"/>
    </location>
</feature>
<feature type="disulfide bond" evidence="4">
    <location>
        <begin position="573"/>
        <end position="625"/>
    </location>
</feature>
<feature type="disulfide bond" evidence="4">
    <location>
        <begin position="579"/>
        <end position="695"/>
    </location>
</feature>
<feature type="disulfide bond" evidence="4">
    <location>
        <begin position="657"/>
        <end position="673"/>
    </location>
</feature>
<feature type="disulfide bond" evidence="4">
    <location>
        <begin position="663"/>
        <end position="685"/>
    </location>
</feature>
<feature type="disulfide bond" evidence="6">
    <location>
        <begin position="732"/>
        <end position="746"/>
    </location>
</feature>
<feature type="cross-link" description="Lysine tyrosylquinone (Lys-Tyr)" evidence="2">
    <location>
        <begin position="653"/>
        <end position="689"/>
    </location>
</feature>
<organism>
    <name type="scientific">Pongo abelii</name>
    <name type="common">Sumatran orangutan</name>
    <name type="synonym">Pongo pygmaeus abelii</name>
    <dbReference type="NCBI Taxonomy" id="9601"/>
    <lineage>
        <taxon>Eukaryota</taxon>
        <taxon>Metazoa</taxon>
        <taxon>Chordata</taxon>
        <taxon>Craniata</taxon>
        <taxon>Vertebrata</taxon>
        <taxon>Euteleostomi</taxon>
        <taxon>Mammalia</taxon>
        <taxon>Eutheria</taxon>
        <taxon>Euarchontoglires</taxon>
        <taxon>Primates</taxon>
        <taxon>Haplorrhini</taxon>
        <taxon>Catarrhini</taxon>
        <taxon>Hominidae</taxon>
        <taxon>Pongo</taxon>
    </lineage>
</organism>
<gene>
    <name type="primary">LOXL2</name>
</gene>
<reference key="1">
    <citation type="submission" date="2004-11" db="EMBL/GenBank/DDBJ databases">
        <authorList>
            <consortium name="The German cDNA consortium"/>
        </authorList>
    </citation>
    <scope>NUCLEOTIDE SEQUENCE [LARGE SCALE MRNA]</scope>
    <source>
        <tissue>Kidney</tissue>
    </source>
</reference>
<dbReference type="EC" id="1.4.3.13" evidence="4"/>
<dbReference type="EMBL" id="CR857096">
    <property type="protein sequence ID" value="CAH89401.1"/>
    <property type="molecule type" value="mRNA"/>
</dbReference>
<dbReference type="SMR" id="Q5RFQ6"/>
<dbReference type="FunCoup" id="Q5RFQ6">
    <property type="interactions" value="575"/>
</dbReference>
<dbReference type="STRING" id="9601.ENSPPYP00000023997"/>
<dbReference type="GlyCosmos" id="Q5RFQ6">
    <property type="glycosylation" value="3 sites, No reported glycans"/>
</dbReference>
<dbReference type="eggNOG" id="ENOG502QSX8">
    <property type="taxonomic scope" value="Eukaryota"/>
</dbReference>
<dbReference type="InParanoid" id="Q5RFQ6"/>
<dbReference type="Proteomes" id="UP000001595">
    <property type="component" value="Unplaced"/>
</dbReference>
<dbReference type="GO" id="GO:0005604">
    <property type="term" value="C:basement membrane"/>
    <property type="evidence" value="ECO:0000250"/>
    <property type="project" value="UniProtKB"/>
</dbReference>
<dbReference type="GO" id="GO:0000785">
    <property type="term" value="C:chromatin"/>
    <property type="evidence" value="ECO:0000250"/>
    <property type="project" value="UniProtKB"/>
</dbReference>
<dbReference type="GO" id="GO:0005783">
    <property type="term" value="C:endoplasmic reticulum"/>
    <property type="evidence" value="ECO:0000250"/>
    <property type="project" value="UniProtKB"/>
</dbReference>
<dbReference type="GO" id="GO:0005615">
    <property type="term" value="C:extracellular space"/>
    <property type="evidence" value="ECO:0000250"/>
    <property type="project" value="UniProtKB"/>
</dbReference>
<dbReference type="GO" id="GO:0016020">
    <property type="term" value="C:membrane"/>
    <property type="evidence" value="ECO:0007669"/>
    <property type="project" value="InterPro"/>
</dbReference>
<dbReference type="GO" id="GO:0005634">
    <property type="term" value="C:nucleus"/>
    <property type="evidence" value="ECO:0000250"/>
    <property type="project" value="UniProtKB"/>
</dbReference>
<dbReference type="GO" id="GO:0005509">
    <property type="term" value="F:calcium ion binding"/>
    <property type="evidence" value="ECO:0000250"/>
    <property type="project" value="UniProtKB"/>
</dbReference>
<dbReference type="GO" id="GO:0005507">
    <property type="term" value="F:copper ion binding"/>
    <property type="evidence" value="ECO:0000250"/>
    <property type="project" value="UniProtKB"/>
</dbReference>
<dbReference type="GO" id="GO:0070492">
    <property type="term" value="F:oligosaccharide binding"/>
    <property type="evidence" value="ECO:0000250"/>
    <property type="project" value="UniProtKB"/>
</dbReference>
<dbReference type="GO" id="GO:0004720">
    <property type="term" value="F:protein-lysine 6-oxidase activity"/>
    <property type="evidence" value="ECO:0000250"/>
    <property type="project" value="UniProtKB"/>
</dbReference>
<dbReference type="GO" id="GO:0030199">
    <property type="term" value="P:collagen fibril organization"/>
    <property type="evidence" value="ECO:0000250"/>
    <property type="project" value="UniProtKB"/>
</dbReference>
<dbReference type="GO" id="GO:0043542">
    <property type="term" value="P:endothelial cell migration"/>
    <property type="evidence" value="ECO:0000250"/>
    <property type="project" value="UniProtKB"/>
</dbReference>
<dbReference type="GO" id="GO:0001935">
    <property type="term" value="P:endothelial cell proliferation"/>
    <property type="evidence" value="ECO:0000250"/>
    <property type="project" value="UniProtKB"/>
</dbReference>
<dbReference type="GO" id="GO:0001837">
    <property type="term" value="P:epithelial to mesenchymal transition"/>
    <property type="evidence" value="ECO:0000250"/>
    <property type="project" value="UniProtKB"/>
</dbReference>
<dbReference type="GO" id="GO:0070828">
    <property type="term" value="P:heterochromatin organization"/>
    <property type="evidence" value="ECO:0000250"/>
    <property type="project" value="UniProtKB"/>
</dbReference>
<dbReference type="GO" id="GO:0045892">
    <property type="term" value="P:negative regulation of DNA-templated transcription"/>
    <property type="evidence" value="ECO:0000250"/>
    <property type="project" value="UniProtKB"/>
</dbReference>
<dbReference type="GO" id="GO:1902455">
    <property type="term" value="P:negative regulation of stem cell population maintenance"/>
    <property type="evidence" value="ECO:0000250"/>
    <property type="project" value="UniProtKB"/>
</dbReference>
<dbReference type="GO" id="GO:0000122">
    <property type="term" value="P:negative regulation of transcription by RNA polymerase II"/>
    <property type="evidence" value="ECO:0000250"/>
    <property type="project" value="UniProtKB"/>
</dbReference>
<dbReference type="GO" id="GO:0018057">
    <property type="term" value="P:peptidyl-lysine oxidation"/>
    <property type="evidence" value="ECO:0000250"/>
    <property type="project" value="UniProtKB"/>
</dbReference>
<dbReference type="GO" id="GO:0032332">
    <property type="term" value="P:positive regulation of chondrocyte differentiation"/>
    <property type="evidence" value="ECO:0000250"/>
    <property type="project" value="UniProtKB"/>
</dbReference>
<dbReference type="GO" id="GO:0010718">
    <property type="term" value="P:positive regulation of epithelial to mesenchymal transition"/>
    <property type="evidence" value="ECO:0000250"/>
    <property type="project" value="UniProtKB"/>
</dbReference>
<dbReference type="GO" id="GO:0036211">
    <property type="term" value="P:protein modification process"/>
    <property type="evidence" value="ECO:0000250"/>
    <property type="project" value="UniProtKB"/>
</dbReference>
<dbReference type="GO" id="GO:0046688">
    <property type="term" value="P:response to copper ion"/>
    <property type="evidence" value="ECO:0000250"/>
    <property type="project" value="UniProtKB"/>
</dbReference>
<dbReference type="GO" id="GO:0001666">
    <property type="term" value="P:response to hypoxia"/>
    <property type="evidence" value="ECO:0000250"/>
    <property type="project" value="UniProtKB"/>
</dbReference>
<dbReference type="GO" id="GO:0002040">
    <property type="term" value="P:sprouting angiogenesis"/>
    <property type="evidence" value="ECO:0000250"/>
    <property type="project" value="UniProtKB"/>
</dbReference>
<dbReference type="FunFam" id="3.10.250.10:FF:000001">
    <property type="entry name" value="Lysyl oxidase 4 isoform X1"/>
    <property type="match status" value="2"/>
</dbReference>
<dbReference type="FunFam" id="3.10.250.10:FF:000008">
    <property type="entry name" value="Lysyl oxidase homolog 2"/>
    <property type="match status" value="1"/>
</dbReference>
<dbReference type="FunFam" id="3.10.250.10:FF:000014">
    <property type="entry name" value="Lysyl oxidase homolog 2"/>
    <property type="match status" value="1"/>
</dbReference>
<dbReference type="Gene3D" id="3.10.250.10">
    <property type="entry name" value="SRCR-like domain"/>
    <property type="match status" value="4"/>
</dbReference>
<dbReference type="InterPro" id="IPR050912">
    <property type="entry name" value="LOX-like_protein"/>
</dbReference>
<dbReference type="InterPro" id="IPR001695">
    <property type="entry name" value="Lysyl_oxidase"/>
</dbReference>
<dbReference type="InterPro" id="IPR019828">
    <property type="entry name" value="Lysyl_oxidase_CS"/>
</dbReference>
<dbReference type="InterPro" id="IPR001190">
    <property type="entry name" value="SRCR"/>
</dbReference>
<dbReference type="InterPro" id="IPR036772">
    <property type="entry name" value="SRCR-like_dom_sf"/>
</dbReference>
<dbReference type="PANTHER" id="PTHR45817:SF1">
    <property type="entry name" value="LYSYL OXIDASE HOMOLOG 2"/>
    <property type="match status" value="1"/>
</dbReference>
<dbReference type="PANTHER" id="PTHR45817">
    <property type="entry name" value="LYSYL OXIDASE-LIKE-RELATED"/>
    <property type="match status" value="1"/>
</dbReference>
<dbReference type="Pfam" id="PF01186">
    <property type="entry name" value="Lysyl_oxidase"/>
    <property type="match status" value="1"/>
</dbReference>
<dbReference type="Pfam" id="PF00530">
    <property type="entry name" value="SRCR"/>
    <property type="match status" value="4"/>
</dbReference>
<dbReference type="PRINTS" id="PR00074">
    <property type="entry name" value="LYSYLOXIDASE"/>
</dbReference>
<dbReference type="PRINTS" id="PR00258">
    <property type="entry name" value="SPERACTRCPTR"/>
</dbReference>
<dbReference type="SMART" id="SM00202">
    <property type="entry name" value="SR"/>
    <property type="match status" value="4"/>
</dbReference>
<dbReference type="SUPFAM" id="SSF56487">
    <property type="entry name" value="SRCR-like"/>
    <property type="match status" value="4"/>
</dbReference>
<dbReference type="PROSITE" id="PS00926">
    <property type="entry name" value="LYSYL_OXIDASE"/>
    <property type="match status" value="1"/>
</dbReference>
<dbReference type="PROSITE" id="PS00420">
    <property type="entry name" value="SRCR_1"/>
    <property type="match status" value="2"/>
</dbReference>
<dbReference type="PROSITE" id="PS50287">
    <property type="entry name" value="SRCR_2"/>
    <property type="match status" value="4"/>
</dbReference>
<comment type="function">
    <text evidence="3 4">Mediates the post-translational oxidative deamination of lysine residues on target proteins leading to the formation of deaminated lysine (allysine). Acts as a transcription corepressor and specifically mediates deamination of trimethylated 'Lys-4' of histone H3 (H3K4me3), a specific tag for epigenetic transcriptional activation. Shows no activity against histone H3 when it is trimethylated on 'Lys-9' (H3K9me3) or 'Lys-27' (H3K27me3) or when 'Lys-4' is monomethylated (H3K4me1) or dimethylated (H3K4me2). Also mediates deamination of methylated TAF10, a member of the transcription factor IID (TFIID) complex, which induces release of TAF10 from promoters, leading to inhibition of TFIID-dependent transcription. LOXL2-mediated deamination of TAF10 results in transcriptional repression of genes required for embryonic stem cell pluripotency including POU5F1/OCT4, NANOG, KLF4 and SOX2. Involved in epithelial to mesenchymal transition (EMT) via interaction with SNAI1 and participates in repression of E-cadherin CDH1, probably by mediating deamination of histone H3. During EMT, involved with SNAI1 in negatively regulating pericentromeric heterochromatin transcription. SNAI1 recruits LOXL2 to pericentromeric regions to oxidize histone H3 and repress transcription which leads to release of heterochromatin component CBX5/HP1A, enabling chromatin reorganization and acquisition of mesenchymal traits. Interacts with the endoplasmic reticulum protein HSPA5 which activates the IRE1-XBP1 pathway of the unfolded protein response, leading to expression of several transcription factors involved in EMT and subsequent EMT induction. When secreted into the extracellular matrix, promotes cross-linking of extracellular matrix proteins by mediating oxidative deamination of peptidyl lysine residues in precursors to fibrous collagen and elastin. Acts as a regulator of sprouting angiogenesis, probably via collagen IV scaffolding. Acts as a regulator of chondrocyte differentiation, probably by regulating expression of factors that control chondrocyte differentiation.</text>
</comment>
<comment type="catalytic activity">
    <reaction evidence="4">
        <text>L-lysyl-[protein] + O2 + H2O = (S)-2-amino-6-oxohexanoyl-[protein] + H2O2 + NH4(+)</text>
        <dbReference type="Rhea" id="RHEA:24544"/>
        <dbReference type="Rhea" id="RHEA-COMP:9752"/>
        <dbReference type="Rhea" id="RHEA-COMP:12448"/>
        <dbReference type="ChEBI" id="CHEBI:15377"/>
        <dbReference type="ChEBI" id="CHEBI:15379"/>
        <dbReference type="ChEBI" id="CHEBI:16240"/>
        <dbReference type="ChEBI" id="CHEBI:28938"/>
        <dbReference type="ChEBI" id="CHEBI:29969"/>
        <dbReference type="ChEBI" id="CHEBI:131803"/>
        <dbReference type="EC" id="1.4.3.13"/>
    </reaction>
</comment>
<comment type="cofactor">
    <cofactor evidence="4">
        <name>Cu cation</name>
        <dbReference type="ChEBI" id="CHEBI:23378"/>
    </cofactor>
</comment>
<comment type="cofactor">
    <cofactor evidence="4">
        <name>lysine tyrosylquinone residue</name>
        <dbReference type="ChEBI" id="CHEBI:20489"/>
    </cofactor>
    <text evidence="2 4">Contains 1 lysine tyrosylquinone.</text>
</comment>
<comment type="activity regulation">
    <text evidence="4">Specifically inhibited by a mouse monoclonal antibody AB0023, inhibition occurs in a non-competitive manner.</text>
</comment>
<comment type="subunit">
    <text evidence="4">Component of some chromatin repressor complex. Interacts with SNAI1. Interacts with TAF10. Interacts with HSPA5. Interacts with EFEMP2 (By similarity).</text>
</comment>
<comment type="subcellular location">
    <subcellularLocation>
        <location evidence="4">Secreted</location>
        <location evidence="4">Extracellular space</location>
        <location evidence="4">Extracellular matrix</location>
        <location evidence="4">Basement membrane</location>
    </subcellularLocation>
    <subcellularLocation>
        <location evidence="4">Nucleus</location>
    </subcellularLocation>
    <subcellularLocation>
        <location evidence="4">Chromosome</location>
    </subcellularLocation>
    <subcellularLocation>
        <location evidence="4">Endoplasmic reticulum</location>
    </subcellularLocation>
    <text evidence="4">Associated with chromatin. It is unclear how LOXL2 is nuclear as it contains a signal sequence and has been shown to be secreted. However, a number of reports confirm its intracellular location and its key role in transcription regulation.</text>
</comment>
<comment type="domain">
    <text evidence="1">The fourth SRCR domain plays an important role in optimizing the catalytic activity of the lysyl-oxidase like (LOX) catalytic domain.</text>
</comment>
<comment type="PTM">
    <text evidence="4">The lysine tyrosylquinone cross-link (LTQ) is generated by condensation of the epsilon-amino group of a lysine with a topaquinone produced by oxidation of tyrosine.</text>
</comment>
<comment type="PTM">
    <text evidence="4">N-glycosylated. N-glycosylation on Asn-455 and Asn-644 may be essential for proper folding and secretion; may be composed of a fucosylated carbohydrates attached to a trimannose N-linked glycan core.</text>
</comment>
<comment type="similarity">
    <text evidence="7">Belongs to the lysyl oxidase family.</text>
</comment>
<accession>Q5RFQ6</accession>